<reference key="1">
    <citation type="journal article" date="2010" name="Int. J. Oncol.">
        <title>Functional characterization of AIBp, a novel Aurora-A binding protein in centrosome structure and spindle formation.</title>
        <authorList>
            <person name="Lieu A.S."/>
            <person name="Cheng T.S."/>
            <person name="Chou C.H."/>
            <person name="Wu C.H."/>
            <person name="Hsu C.Y."/>
            <person name="Huang C.Y."/>
            <person name="Chang L.K."/>
            <person name="Loh J.K."/>
            <person name="Chang C.S."/>
            <person name="Hsu C.M."/>
            <person name="Howng S.L."/>
            <person name="Hong Y.R."/>
        </authorList>
    </citation>
    <scope>NUCLEOTIDE SEQUENCE [MRNA] (ISOFORM 2)</scope>
    <scope>SUBCELLULAR LOCATION</scope>
    <scope>FUNCTION</scope>
    <scope>INDUCTION</scope>
    <scope>INTERACTION WITH AURKA AND NIN</scope>
</reference>
<reference key="2">
    <citation type="journal article" date="2004" name="Nat. Genet.">
        <title>Complete sequencing and characterization of 21,243 full-length human cDNAs.</title>
        <authorList>
            <person name="Ota T."/>
            <person name="Suzuki Y."/>
            <person name="Nishikawa T."/>
            <person name="Otsuki T."/>
            <person name="Sugiyama T."/>
            <person name="Irie R."/>
            <person name="Wakamatsu A."/>
            <person name="Hayashi K."/>
            <person name="Sato H."/>
            <person name="Nagai K."/>
            <person name="Kimura K."/>
            <person name="Makita H."/>
            <person name="Sekine M."/>
            <person name="Obayashi M."/>
            <person name="Nishi T."/>
            <person name="Shibahara T."/>
            <person name="Tanaka T."/>
            <person name="Ishii S."/>
            <person name="Yamamoto J."/>
            <person name="Saito K."/>
            <person name="Kawai Y."/>
            <person name="Isono Y."/>
            <person name="Nakamura Y."/>
            <person name="Nagahari K."/>
            <person name="Murakami K."/>
            <person name="Yasuda T."/>
            <person name="Iwayanagi T."/>
            <person name="Wagatsuma M."/>
            <person name="Shiratori A."/>
            <person name="Sudo H."/>
            <person name="Hosoiri T."/>
            <person name="Kaku Y."/>
            <person name="Kodaira H."/>
            <person name="Kondo H."/>
            <person name="Sugawara M."/>
            <person name="Takahashi M."/>
            <person name="Kanda K."/>
            <person name="Yokoi T."/>
            <person name="Furuya T."/>
            <person name="Kikkawa E."/>
            <person name="Omura Y."/>
            <person name="Abe K."/>
            <person name="Kamihara K."/>
            <person name="Katsuta N."/>
            <person name="Sato K."/>
            <person name="Tanikawa M."/>
            <person name="Yamazaki M."/>
            <person name="Ninomiya K."/>
            <person name="Ishibashi T."/>
            <person name="Yamashita H."/>
            <person name="Murakawa K."/>
            <person name="Fujimori K."/>
            <person name="Tanai H."/>
            <person name="Kimata M."/>
            <person name="Watanabe M."/>
            <person name="Hiraoka S."/>
            <person name="Chiba Y."/>
            <person name="Ishida S."/>
            <person name="Ono Y."/>
            <person name="Takiguchi S."/>
            <person name="Watanabe S."/>
            <person name="Yosida M."/>
            <person name="Hotuta T."/>
            <person name="Kusano J."/>
            <person name="Kanehori K."/>
            <person name="Takahashi-Fujii A."/>
            <person name="Hara H."/>
            <person name="Tanase T.-O."/>
            <person name="Nomura Y."/>
            <person name="Togiya S."/>
            <person name="Komai F."/>
            <person name="Hara R."/>
            <person name="Takeuchi K."/>
            <person name="Arita M."/>
            <person name="Imose N."/>
            <person name="Musashino K."/>
            <person name="Yuuki H."/>
            <person name="Oshima A."/>
            <person name="Sasaki N."/>
            <person name="Aotsuka S."/>
            <person name="Yoshikawa Y."/>
            <person name="Matsunawa H."/>
            <person name="Ichihara T."/>
            <person name="Shiohata N."/>
            <person name="Sano S."/>
            <person name="Moriya S."/>
            <person name="Momiyama H."/>
            <person name="Satoh N."/>
            <person name="Takami S."/>
            <person name="Terashima Y."/>
            <person name="Suzuki O."/>
            <person name="Nakagawa S."/>
            <person name="Senoh A."/>
            <person name="Mizoguchi H."/>
            <person name="Goto Y."/>
            <person name="Shimizu F."/>
            <person name="Wakebe H."/>
            <person name="Hishigaki H."/>
            <person name="Watanabe T."/>
            <person name="Sugiyama A."/>
            <person name="Takemoto M."/>
            <person name="Kawakami B."/>
            <person name="Yamazaki M."/>
            <person name="Watanabe K."/>
            <person name="Kumagai A."/>
            <person name="Itakura S."/>
            <person name="Fukuzumi Y."/>
            <person name="Fujimori Y."/>
            <person name="Komiyama M."/>
            <person name="Tashiro H."/>
            <person name="Tanigami A."/>
            <person name="Fujiwara T."/>
            <person name="Ono T."/>
            <person name="Yamada K."/>
            <person name="Fujii Y."/>
            <person name="Ozaki K."/>
            <person name="Hirao M."/>
            <person name="Ohmori Y."/>
            <person name="Kawabata A."/>
            <person name="Hikiji T."/>
            <person name="Kobatake N."/>
            <person name="Inagaki H."/>
            <person name="Ikema Y."/>
            <person name="Okamoto S."/>
            <person name="Okitani R."/>
            <person name="Kawakami T."/>
            <person name="Noguchi S."/>
            <person name="Itoh T."/>
            <person name="Shigeta K."/>
            <person name="Senba T."/>
            <person name="Matsumura K."/>
            <person name="Nakajima Y."/>
            <person name="Mizuno T."/>
            <person name="Morinaga M."/>
            <person name="Sasaki M."/>
            <person name="Togashi T."/>
            <person name="Oyama M."/>
            <person name="Hata H."/>
            <person name="Watanabe M."/>
            <person name="Komatsu T."/>
            <person name="Mizushima-Sugano J."/>
            <person name="Satoh T."/>
            <person name="Shirai Y."/>
            <person name="Takahashi Y."/>
            <person name="Nakagawa K."/>
            <person name="Okumura K."/>
            <person name="Nagase T."/>
            <person name="Nomura N."/>
            <person name="Kikuchi H."/>
            <person name="Masuho Y."/>
            <person name="Yamashita R."/>
            <person name="Nakai K."/>
            <person name="Yada T."/>
            <person name="Nakamura Y."/>
            <person name="Ohara O."/>
            <person name="Isogai T."/>
            <person name="Sugano S."/>
        </authorList>
    </citation>
    <scope>NUCLEOTIDE SEQUENCE [LARGE SCALE MRNA] (ISOFORM 1)</scope>
    <source>
        <tissue>Placenta</tissue>
    </source>
</reference>
<reference key="3">
    <citation type="submission" date="2005-04" db="EMBL/GenBank/DDBJ databases">
        <authorList>
            <person name="Totoki Y."/>
            <person name="Toyoda A."/>
            <person name="Takeda T."/>
            <person name="Sakaki Y."/>
            <person name="Tanaka A."/>
            <person name="Yokoyama S."/>
        </authorList>
    </citation>
    <scope>NUCLEOTIDE SEQUENCE [LARGE SCALE MRNA] (ISOFORM 1)</scope>
    <scope>VARIANT THR-82</scope>
    <source>
        <tissue>Kidney epithelium</tissue>
    </source>
</reference>
<reference key="4">
    <citation type="journal article" date="2006" name="Nature">
        <title>The DNA sequence and biological annotation of human chromosome 1.</title>
        <authorList>
            <person name="Gregory S.G."/>
            <person name="Barlow K.F."/>
            <person name="McLay K.E."/>
            <person name="Kaul R."/>
            <person name="Swarbreck D."/>
            <person name="Dunham A."/>
            <person name="Scott C.E."/>
            <person name="Howe K.L."/>
            <person name="Woodfine K."/>
            <person name="Spencer C.C.A."/>
            <person name="Jones M.C."/>
            <person name="Gillson C."/>
            <person name="Searle S."/>
            <person name="Zhou Y."/>
            <person name="Kokocinski F."/>
            <person name="McDonald L."/>
            <person name="Evans R."/>
            <person name="Phillips K."/>
            <person name="Atkinson A."/>
            <person name="Cooper R."/>
            <person name="Jones C."/>
            <person name="Hall R.E."/>
            <person name="Andrews T.D."/>
            <person name="Lloyd C."/>
            <person name="Ainscough R."/>
            <person name="Almeida J.P."/>
            <person name="Ambrose K.D."/>
            <person name="Anderson F."/>
            <person name="Andrew R.W."/>
            <person name="Ashwell R.I.S."/>
            <person name="Aubin K."/>
            <person name="Babbage A.K."/>
            <person name="Bagguley C.L."/>
            <person name="Bailey J."/>
            <person name="Beasley H."/>
            <person name="Bethel G."/>
            <person name="Bird C.P."/>
            <person name="Bray-Allen S."/>
            <person name="Brown J.Y."/>
            <person name="Brown A.J."/>
            <person name="Buckley D."/>
            <person name="Burton J."/>
            <person name="Bye J."/>
            <person name="Carder C."/>
            <person name="Chapman J.C."/>
            <person name="Clark S.Y."/>
            <person name="Clarke G."/>
            <person name="Clee C."/>
            <person name="Cobley V."/>
            <person name="Collier R.E."/>
            <person name="Corby N."/>
            <person name="Coville G.J."/>
            <person name="Davies J."/>
            <person name="Deadman R."/>
            <person name="Dunn M."/>
            <person name="Earthrowl M."/>
            <person name="Ellington A.G."/>
            <person name="Errington H."/>
            <person name="Frankish A."/>
            <person name="Frankland J."/>
            <person name="French L."/>
            <person name="Garner P."/>
            <person name="Garnett J."/>
            <person name="Gay L."/>
            <person name="Ghori M.R.J."/>
            <person name="Gibson R."/>
            <person name="Gilby L.M."/>
            <person name="Gillett W."/>
            <person name="Glithero R.J."/>
            <person name="Grafham D.V."/>
            <person name="Griffiths C."/>
            <person name="Griffiths-Jones S."/>
            <person name="Grocock R."/>
            <person name="Hammond S."/>
            <person name="Harrison E.S.I."/>
            <person name="Hart E."/>
            <person name="Haugen E."/>
            <person name="Heath P.D."/>
            <person name="Holmes S."/>
            <person name="Holt K."/>
            <person name="Howden P.J."/>
            <person name="Hunt A.R."/>
            <person name="Hunt S.E."/>
            <person name="Hunter G."/>
            <person name="Isherwood J."/>
            <person name="James R."/>
            <person name="Johnson C."/>
            <person name="Johnson D."/>
            <person name="Joy A."/>
            <person name="Kay M."/>
            <person name="Kershaw J.K."/>
            <person name="Kibukawa M."/>
            <person name="Kimberley A.M."/>
            <person name="King A."/>
            <person name="Knights A.J."/>
            <person name="Lad H."/>
            <person name="Laird G."/>
            <person name="Lawlor S."/>
            <person name="Leongamornlert D.A."/>
            <person name="Lloyd D.M."/>
            <person name="Loveland J."/>
            <person name="Lovell J."/>
            <person name="Lush M.J."/>
            <person name="Lyne R."/>
            <person name="Martin S."/>
            <person name="Mashreghi-Mohammadi M."/>
            <person name="Matthews L."/>
            <person name="Matthews N.S.W."/>
            <person name="McLaren S."/>
            <person name="Milne S."/>
            <person name="Mistry S."/>
            <person name="Moore M.J.F."/>
            <person name="Nickerson T."/>
            <person name="O'Dell C.N."/>
            <person name="Oliver K."/>
            <person name="Palmeiri A."/>
            <person name="Palmer S.A."/>
            <person name="Parker A."/>
            <person name="Patel D."/>
            <person name="Pearce A.V."/>
            <person name="Peck A.I."/>
            <person name="Pelan S."/>
            <person name="Phelps K."/>
            <person name="Phillimore B.J."/>
            <person name="Plumb R."/>
            <person name="Rajan J."/>
            <person name="Raymond C."/>
            <person name="Rouse G."/>
            <person name="Saenphimmachak C."/>
            <person name="Sehra H.K."/>
            <person name="Sheridan E."/>
            <person name="Shownkeen R."/>
            <person name="Sims S."/>
            <person name="Skuce C.D."/>
            <person name="Smith M."/>
            <person name="Steward C."/>
            <person name="Subramanian S."/>
            <person name="Sycamore N."/>
            <person name="Tracey A."/>
            <person name="Tromans A."/>
            <person name="Van Helmond Z."/>
            <person name="Wall M."/>
            <person name="Wallis J.M."/>
            <person name="White S."/>
            <person name="Whitehead S.L."/>
            <person name="Wilkinson J.E."/>
            <person name="Willey D.L."/>
            <person name="Williams H."/>
            <person name="Wilming L."/>
            <person name="Wray P.W."/>
            <person name="Wu Z."/>
            <person name="Coulson A."/>
            <person name="Vaudin M."/>
            <person name="Sulston J.E."/>
            <person name="Durbin R.M."/>
            <person name="Hubbard T."/>
            <person name="Wooster R."/>
            <person name="Dunham I."/>
            <person name="Carter N.P."/>
            <person name="McVean G."/>
            <person name="Ross M.T."/>
            <person name="Harrow J."/>
            <person name="Olson M.V."/>
            <person name="Beck S."/>
            <person name="Rogers J."/>
            <person name="Bentley D.R."/>
        </authorList>
    </citation>
    <scope>NUCLEOTIDE SEQUENCE [LARGE SCALE GENOMIC DNA]</scope>
</reference>
<reference key="5">
    <citation type="journal article" date="2004" name="Genome Res.">
        <title>The status, quality, and expansion of the NIH full-length cDNA project: the Mammalian Gene Collection (MGC).</title>
        <authorList>
            <consortium name="The MGC Project Team"/>
        </authorList>
    </citation>
    <scope>NUCLEOTIDE SEQUENCE [LARGE SCALE MRNA] (ISOFORM 1)</scope>
    <source>
        <tissue>Eye</tissue>
    </source>
</reference>
<reference key="6">
    <citation type="journal article" date="2007" name="Science">
        <title>ATM and ATR substrate analysis reveals extensive protein networks responsive to DNA damage.</title>
        <authorList>
            <person name="Matsuoka S."/>
            <person name="Ballif B.A."/>
            <person name="Smogorzewska A."/>
            <person name="McDonald E.R. III"/>
            <person name="Hurov K.E."/>
            <person name="Luo J."/>
            <person name="Bakalarski C.E."/>
            <person name="Zhao Z."/>
            <person name="Solimini N."/>
            <person name="Lerenthal Y."/>
            <person name="Shiloh Y."/>
            <person name="Gygi S.P."/>
            <person name="Elledge S.J."/>
        </authorList>
    </citation>
    <scope>PHOSPHORYLATION [LARGE SCALE ANALYSIS] AT SER-292</scope>
    <scope>IDENTIFICATION BY MASS SPECTROMETRY [LARGE SCALE ANALYSIS]</scope>
    <source>
        <tissue>Embryonic kidney</tissue>
    </source>
</reference>
<reference key="7">
    <citation type="journal article" date="2013" name="J. Proteome Res.">
        <title>Toward a comprehensive characterization of a human cancer cell phosphoproteome.</title>
        <authorList>
            <person name="Zhou H."/>
            <person name="Di Palma S."/>
            <person name="Preisinger C."/>
            <person name="Peng M."/>
            <person name="Polat A.N."/>
            <person name="Heck A.J."/>
            <person name="Mohammed S."/>
        </authorList>
    </citation>
    <scope>PHOSPHORYLATION [LARGE SCALE ANALYSIS] AT SER-267 AND SER-292</scope>
    <scope>IDENTIFICATION BY MASS SPECTROMETRY [LARGE SCALE ANALYSIS]</scope>
    <source>
        <tissue>Cervix carcinoma</tissue>
        <tissue>Erythroleukemia</tissue>
    </source>
</reference>
<reference key="8">
    <citation type="journal article" date="2017" name="Nat. Commun.">
        <title>AUNIP/C1orf135 directs DNA double-strand breaks towards the homologous recombination repair pathway.</title>
        <authorList>
            <person name="Lou J."/>
            <person name="Chen H."/>
            <person name="Han J."/>
            <person name="He H."/>
            <person name="Huen M.S.Y."/>
            <person name="Feng X.H."/>
            <person name="Liu T."/>
            <person name="Huang J."/>
        </authorList>
    </citation>
    <scope>FUNCTION</scope>
    <scope>SUBCELLULAR LOCATION</scope>
    <scope>INTERACTION WITH RBBP8</scope>
    <scope>DNA-BINDING</scope>
</reference>
<gene>
    <name evidence="6 8" type="primary">AUNIP</name>
    <name evidence="8" type="synonym">C1orf135</name>
</gene>
<dbReference type="EMBL" id="GQ844687">
    <property type="protein sequence ID" value="ACV90488.1"/>
    <property type="molecule type" value="mRNA"/>
</dbReference>
<dbReference type="EMBL" id="AK024326">
    <property type="protein sequence ID" value="BAB14886.1"/>
    <property type="molecule type" value="mRNA"/>
</dbReference>
<dbReference type="EMBL" id="AK223419">
    <property type="protein sequence ID" value="BAD97139.1"/>
    <property type="molecule type" value="mRNA"/>
</dbReference>
<dbReference type="EMBL" id="AL020996">
    <property type="status" value="NOT_ANNOTATED_CDS"/>
    <property type="molecule type" value="Genomic_DNA"/>
</dbReference>
<dbReference type="EMBL" id="AL033528">
    <property type="status" value="NOT_ANNOTATED_CDS"/>
    <property type="molecule type" value="Genomic_DNA"/>
</dbReference>
<dbReference type="EMBL" id="BC000209">
    <property type="protein sequence ID" value="AAH00209.1"/>
    <property type="molecule type" value="mRNA"/>
</dbReference>
<dbReference type="CCDS" id="CCDS266.1">
    <molecule id="Q9H7T9-1"/>
</dbReference>
<dbReference type="CCDS" id="CCDS72731.1">
    <molecule id="Q9H7T9-2"/>
</dbReference>
<dbReference type="RefSeq" id="NP_001274419.1">
    <molecule id="Q9H7T9-2"/>
    <property type="nucleotide sequence ID" value="NM_001287490.2"/>
</dbReference>
<dbReference type="RefSeq" id="NP_076942.1">
    <molecule id="Q9H7T9-1"/>
    <property type="nucleotide sequence ID" value="NM_024037.3"/>
</dbReference>
<dbReference type="BioGRID" id="122471">
    <property type="interactions" value="16"/>
</dbReference>
<dbReference type="CORUM" id="Q9H7T9"/>
<dbReference type="FunCoup" id="Q9H7T9">
    <property type="interactions" value="213"/>
</dbReference>
<dbReference type="IntAct" id="Q9H7T9">
    <property type="interactions" value="15"/>
</dbReference>
<dbReference type="STRING" id="9606.ENSP00000443647"/>
<dbReference type="iPTMnet" id="Q9H7T9"/>
<dbReference type="PhosphoSitePlus" id="Q9H7T9"/>
<dbReference type="BioMuta" id="AUNIP"/>
<dbReference type="DMDM" id="74733700"/>
<dbReference type="jPOST" id="Q9H7T9"/>
<dbReference type="MassIVE" id="Q9H7T9"/>
<dbReference type="PaxDb" id="9606-ENSP00000443647"/>
<dbReference type="PeptideAtlas" id="Q9H7T9"/>
<dbReference type="ProteomicsDB" id="7615"/>
<dbReference type="ProteomicsDB" id="81147">
    <molecule id="Q9H7T9-1"/>
</dbReference>
<dbReference type="Pumba" id="Q9H7T9"/>
<dbReference type="Antibodypedia" id="50871">
    <property type="antibodies" value="56 antibodies from 12 providers"/>
</dbReference>
<dbReference type="DNASU" id="79000"/>
<dbReference type="Ensembl" id="ENST00000374298.4">
    <molecule id="Q9H7T9-1"/>
    <property type="protein sequence ID" value="ENSP00000363416.4"/>
    <property type="gene ID" value="ENSG00000127423.11"/>
</dbReference>
<dbReference type="Ensembl" id="ENST00000538789.5">
    <molecule id="Q9H7T9-2"/>
    <property type="protein sequence ID" value="ENSP00000443647.1"/>
    <property type="gene ID" value="ENSG00000127423.11"/>
</dbReference>
<dbReference type="GeneID" id="79000"/>
<dbReference type="KEGG" id="hsa:79000"/>
<dbReference type="MANE-Select" id="ENST00000374298.4">
    <property type="protein sequence ID" value="ENSP00000363416.4"/>
    <property type="RefSeq nucleotide sequence ID" value="NM_024037.3"/>
    <property type="RefSeq protein sequence ID" value="NP_076942.1"/>
</dbReference>
<dbReference type="UCSC" id="uc001bkw.3">
    <molecule id="Q9H7T9-1"/>
    <property type="organism name" value="human"/>
</dbReference>
<dbReference type="AGR" id="HGNC:28363"/>
<dbReference type="CTD" id="79000"/>
<dbReference type="DisGeNET" id="79000"/>
<dbReference type="GeneCards" id="AUNIP"/>
<dbReference type="HGNC" id="HGNC:28363">
    <property type="gene designation" value="AUNIP"/>
</dbReference>
<dbReference type="HPA" id="ENSG00000127423">
    <property type="expression patterns" value="Group enriched (bone marrow, testis)"/>
</dbReference>
<dbReference type="MIM" id="620397">
    <property type="type" value="gene"/>
</dbReference>
<dbReference type="neXtProt" id="NX_Q9H7T9"/>
<dbReference type="OpenTargets" id="ENSG00000127423"/>
<dbReference type="PharmGKB" id="PA142672453"/>
<dbReference type="VEuPathDB" id="HostDB:ENSG00000127423"/>
<dbReference type="eggNOG" id="ENOG502SFBZ">
    <property type="taxonomic scope" value="Eukaryota"/>
</dbReference>
<dbReference type="GeneTree" id="ENSGT00390000003280"/>
<dbReference type="HOGENOM" id="CLU_835590_0_0_1"/>
<dbReference type="InParanoid" id="Q9H7T9"/>
<dbReference type="OMA" id="VTNNQNR"/>
<dbReference type="OrthoDB" id="9946974at2759"/>
<dbReference type="PAN-GO" id="Q9H7T9">
    <property type="GO annotations" value="3 GO annotations based on evolutionary models"/>
</dbReference>
<dbReference type="PhylomeDB" id="Q9H7T9"/>
<dbReference type="TreeFam" id="TF337334"/>
<dbReference type="PathwayCommons" id="Q9H7T9"/>
<dbReference type="SignaLink" id="Q9H7T9"/>
<dbReference type="BioGRID-ORCS" id="79000">
    <property type="hits" value="28 hits in 1169 CRISPR screens"/>
</dbReference>
<dbReference type="ChiTaRS" id="AUNIP">
    <property type="organism name" value="human"/>
</dbReference>
<dbReference type="GenomeRNAi" id="79000"/>
<dbReference type="Pharos" id="Q9H7T9">
    <property type="development level" value="Tbio"/>
</dbReference>
<dbReference type="PRO" id="PR:Q9H7T9"/>
<dbReference type="Proteomes" id="UP000005640">
    <property type="component" value="Chromosome 1"/>
</dbReference>
<dbReference type="RNAct" id="Q9H7T9">
    <property type="molecule type" value="protein"/>
</dbReference>
<dbReference type="Bgee" id="ENSG00000127423">
    <property type="expression patterns" value="Expressed in oocyte and 110 other cell types or tissues"/>
</dbReference>
<dbReference type="GO" id="GO:0005813">
    <property type="term" value="C:centrosome"/>
    <property type="evidence" value="ECO:0000314"/>
    <property type="project" value="HPA"/>
</dbReference>
<dbReference type="GO" id="GO:0005737">
    <property type="term" value="C:cytoplasm"/>
    <property type="evidence" value="ECO:0007669"/>
    <property type="project" value="UniProtKB-KW"/>
</dbReference>
<dbReference type="GO" id="GO:0005634">
    <property type="term" value="C:nucleus"/>
    <property type="evidence" value="ECO:0007669"/>
    <property type="project" value="UniProtKB-SubCell"/>
</dbReference>
<dbReference type="GO" id="GO:0090734">
    <property type="term" value="C:site of DNA damage"/>
    <property type="evidence" value="ECO:0000314"/>
    <property type="project" value="UniProtKB"/>
</dbReference>
<dbReference type="GO" id="GO:0000922">
    <property type="term" value="C:spindle pole"/>
    <property type="evidence" value="ECO:0000314"/>
    <property type="project" value="UniProtKB"/>
</dbReference>
<dbReference type="GO" id="GO:0003684">
    <property type="term" value="F:damaged DNA binding"/>
    <property type="evidence" value="ECO:0000314"/>
    <property type="project" value="UniProtKB"/>
</dbReference>
<dbReference type="GO" id="GO:0000724">
    <property type="term" value="P:double-strand break repair via homologous recombination"/>
    <property type="evidence" value="ECO:0000314"/>
    <property type="project" value="UniProtKB"/>
</dbReference>
<dbReference type="GO" id="GO:2001033">
    <property type="term" value="P:negative regulation of double-strand break repair via nonhomologous end joining"/>
    <property type="evidence" value="ECO:0000314"/>
    <property type="project" value="UniProtKB"/>
</dbReference>
<dbReference type="GO" id="GO:0007051">
    <property type="term" value="P:spindle organization"/>
    <property type="evidence" value="ECO:0000315"/>
    <property type="project" value="UniProtKB"/>
</dbReference>
<dbReference type="InterPro" id="IPR029286">
    <property type="entry name" value="AUNIP"/>
</dbReference>
<dbReference type="PANTHER" id="PTHR14526">
    <property type="entry name" value="AURORA KINASE A AND NINEIN-INTERACTING PROTEIN"/>
    <property type="match status" value="1"/>
</dbReference>
<dbReference type="PANTHER" id="PTHR14526:SF2">
    <property type="entry name" value="AURORA KINASE A AND NINEIN-INTERACTING PROTEIN"/>
    <property type="match status" value="1"/>
</dbReference>
<dbReference type="Pfam" id="PF15334">
    <property type="entry name" value="AIB"/>
    <property type="match status" value="1"/>
</dbReference>
<comment type="function">
    <text evidence="2 3">DNA-binding protein that accumulates at DNA double-strand breaks (DSBs) following DNA damage and promotes DNA resection and homologous recombination (PubMed:29042561). Serves as a sensor of DNA damage: binds DNA with a strong preference for DNA substrates that mimic structures generated at stalled replication forks, and anchors RBBP8/CtIP to DSB sites to promote DNA end resection and ensuing homologous recombination repair (PubMed:29042561). Inhibits non-homologous end joining (NHEJ) (PubMed:29042561). Required for the dynamic movement of AURKA at the centrosomes and spindle apparatus during the cell cycle (PubMed:20596670).</text>
</comment>
<comment type="subunit">
    <text evidence="2 3">Interacts (via C-terminus) with AURKA (via C-terminus) (PubMed:20596670). Interacts (via N-terminus) with NIN; this interaction blocks NIN phosphorylation by both AURKA and GSK3B (PubMed:20596670). Identified in a complex with NIN and AURKA (PubMed:20596670). Interacts with RBBP8/CtIP (PubMed:29042561).</text>
</comment>
<comment type="interaction">
    <interactant intactId="EBI-10693257">
        <id>Q9H7T9</id>
    </interactant>
    <interactant intactId="EBI-725606">
        <id>Q9NWQ9</id>
        <label>C14orf119</label>
    </interactant>
    <organismsDiffer>false</organismsDiffer>
    <experiments>3</experiments>
</comment>
<comment type="interaction">
    <interactant intactId="EBI-10693257">
        <id>Q9H7T9</id>
    </interactant>
    <interactant intactId="EBI-750300">
        <id>Q01658</id>
        <label>DR1</label>
    </interactant>
    <organismsDiffer>false</organismsDiffer>
    <experiments>3</experiments>
</comment>
<comment type="interaction">
    <interactant intactId="EBI-10693257">
        <id>Q9H7T9</id>
    </interactant>
    <interactant intactId="EBI-348399">
        <id>P22607</id>
        <label>FGFR3</label>
    </interactant>
    <organismsDiffer>false</organismsDiffer>
    <experiments>3</experiments>
</comment>
<comment type="interaction">
    <interactant intactId="EBI-10693257">
        <id>Q9H7T9</id>
    </interactant>
    <interactant intactId="EBI-351506">
        <id>P06396</id>
        <label>GSN</label>
    </interactant>
    <organismsDiffer>false</organismsDiffer>
    <experiments>3</experiments>
</comment>
<comment type="interaction">
    <interactant intactId="EBI-10693257">
        <id>Q9H7T9</id>
    </interactant>
    <interactant intactId="EBI-1054873">
        <id>Q9Y5Q9</id>
        <label>GTF3C3</label>
    </interactant>
    <organismsDiffer>false</organismsDiffer>
    <experiments>3</experiments>
</comment>
<comment type="interaction">
    <interactant intactId="EBI-10693257">
        <id>Q9H7T9</id>
    </interactant>
    <interactant intactId="EBI-350145">
        <id>P01112</id>
        <label>HRAS</label>
    </interactant>
    <organismsDiffer>false</organismsDiffer>
    <experiments>3</experiments>
</comment>
<comment type="interaction">
    <interactant intactId="EBI-10693257">
        <id>Q9H7T9</id>
    </interactant>
    <interactant intactId="EBI-398874">
        <id>Q9UBU9</id>
        <label>NXF1</label>
    </interactant>
    <organismsDiffer>false</organismsDiffer>
    <experiments>3</experiments>
</comment>
<comment type="interaction">
    <interactant intactId="EBI-10693257">
        <id>Q9H7T9</id>
    </interactant>
    <interactant intactId="EBI-1053424">
        <id>O43741</id>
        <label>PRKAB2</label>
    </interactant>
    <organismsDiffer>false</organismsDiffer>
    <experiments>3</experiments>
</comment>
<comment type="interaction">
    <interactant intactId="EBI-10693257">
        <id>Q9H7T9</id>
    </interactant>
    <interactant intactId="EBI-2130449">
        <id>Q6AZZ1</id>
        <label>TRIM68</label>
    </interactant>
    <organismsDiffer>false</organismsDiffer>
    <experiments>2</experiments>
</comment>
<comment type="interaction">
    <interactant intactId="EBI-10693257">
        <id>Q9H7T9</id>
    </interactant>
    <interactant intactId="EBI-25900580">
        <id>Q9Y649</id>
    </interactant>
    <organismsDiffer>false</organismsDiffer>
    <experiments>3</experiments>
</comment>
<comment type="subcellular location">
    <subcellularLocation>
        <location evidence="3">Nucleus</location>
    </subcellularLocation>
    <subcellularLocation>
        <location evidence="3">Chromosome</location>
    </subcellularLocation>
    <subcellularLocation>
        <location evidence="2">Cytoplasm</location>
        <location evidence="2">Cytoskeleton</location>
        <location evidence="2">Microtubule organizing center</location>
        <location evidence="2">Centrosome</location>
    </subcellularLocation>
    <subcellularLocation>
        <location evidence="2">Cytoplasm</location>
        <location evidence="2">Cytoskeleton</location>
        <location evidence="2">Spindle pole</location>
    </subcellularLocation>
    <text evidence="2 3">Accumulates at sites of DNA damage by binding to DNA substrates that mimick structures generated at stalled replication forks (PubMed:29042561). Localizes to the centrosome in interphase and to the spindle pole in metaphase (PubMed:20596670).</text>
</comment>
<comment type="alternative products">
    <event type="alternative splicing"/>
    <isoform>
        <id>Q9H7T9-1</id>
        <name>1</name>
        <sequence type="displayed"/>
    </isoform>
    <isoform>
        <id>Q9H7T9-2</id>
        <name>2</name>
        <sequence type="described" ref="VSP_044288"/>
    </isoform>
</comment>
<comment type="tissue specificity">
    <text>Expressed in heart, skeletal muscles, placenta and testis.</text>
</comment>
<comment type="induction">
    <text evidence="2">Overexpressed in brain tumors.</text>
</comment>
<comment type="similarity">
    <text evidence="7">Belongs to the AUNIP family.</text>
</comment>
<sequence length="357" mass="40253">MRRTGPEEEACGVWLDAAALKRRKVQTHLIKPGTKMLTLLPGERKANIYFTQRRAPSTGIHQRSIASFFTLQPGKTNGSDQKSVSSHTESQINKESKKNATQLDHLIPGLAHDCMASPLATSTTADIQEAGLSPQSLQTSGHHRMKTPFSTELSLLQPDTPDCAGDSHTPLAFSFTEDLESSCLLDRKEEKGDSARKWEWLHESKKNYQSMEKHTKLPGDKCCQPLGKTKLERKVSAKENRQAPVLLQTYRESWNGENIESVKQSRSPVSVFSWDNEKNDKDSWSQLFTEDSQGQRVIAHNTRAPFQDVTNNWNWDLGPFPNSPWAQCQEDGPTQNLKPDLLFTQDSEGNQVIRHQF</sequence>
<feature type="chain" id="PRO_0000284572" description="Aurora kinase A- and ninein-interacting protein">
    <location>
        <begin position="1"/>
        <end position="357"/>
    </location>
</feature>
<feature type="region of interest" description="Disordered" evidence="1">
    <location>
        <begin position="71"/>
        <end position="98"/>
    </location>
</feature>
<feature type="region of interest" description="Interaction with AURKA" evidence="2">
    <location>
        <begin position="187"/>
        <end position="357"/>
    </location>
</feature>
<feature type="region of interest" description="Interaction with RBBP8/CtIP" evidence="3">
    <location>
        <begin position="281"/>
        <end position="357"/>
    </location>
</feature>
<feature type="compositionally biased region" description="Polar residues" evidence="1">
    <location>
        <begin position="71"/>
        <end position="91"/>
    </location>
</feature>
<feature type="modified residue" description="Phosphoserine" evidence="10">
    <location>
        <position position="267"/>
    </location>
</feature>
<feature type="modified residue" description="Phosphoserine" evidence="9 10">
    <location>
        <position position="292"/>
    </location>
</feature>
<feature type="splice variant" id="VSP_044288" description="In isoform 2." evidence="5">
    <original>GNQVIRHQF</original>
    <variation>VQALACQQDCCRRSILKRQKHLR</variation>
    <location>
        <begin position="349"/>
        <end position="357"/>
    </location>
</feature>
<feature type="sequence variant" id="VAR_031776" description="In dbSNP:rs34449716." evidence="4">
    <original>K</original>
    <variation>T</variation>
    <location>
        <position position="82"/>
    </location>
</feature>
<proteinExistence type="evidence at protein level"/>
<name>AUNIP_HUMAN</name>
<protein>
    <recommendedName>
        <fullName evidence="5">Aurora kinase A- and ninein-interacting protein</fullName>
        <shortName evidence="5">AIBp</shortName>
    </recommendedName>
</protein>
<accession>Q9H7T9</accession>
<accession>C9EI59</accession>
<accession>Q53F70</accession>
<evidence type="ECO:0000256" key="1">
    <source>
        <dbReference type="SAM" id="MobiDB-lite"/>
    </source>
</evidence>
<evidence type="ECO:0000269" key="2">
    <source>
    </source>
</evidence>
<evidence type="ECO:0000269" key="3">
    <source>
    </source>
</evidence>
<evidence type="ECO:0000269" key="4">
    <source ref="3"/>
</evidence>
<evidence type="ECO:0000303" key="5">
    <source>
    </source>
</evidence>
<evidence type="ECO:0000303" key="6">
    <source>
    </source>
</evidence>
<evidence type="ECO:0000305" key="7"/>
<evidence type="ECO:0000312" key="8">
    <source>
        <dbReference type="HGNC" id="HGNC:28363"/>
    </source>
</evidence>
<evidence type="ECO:0007744" key="9">
    <source>
    </source>
</evidence>
<evidence type="ECO:0007744" key="10">
    <source>
    </source>
</evidence>
<keyword id="KW-0025">Alternative splicing</keyword>
<keyword id="KW-0158">Chromosome</keyword>
<keyword id="KW-0963">Cytoplasm</keyword>
<keyword id="KW-0206">Cytoskeleton</keyword>
<keyword id="KW-0227">DNA damage</keyword>
<keyword id="KW-0234">DNA repair</keyword>
<keyword id="KW-0238">DNA-binding</keyword>
<keyword id="KW-0539">Nucleus</keyword>
<keyword id="KW-0597">Phosphoprotein</keyword>
<keyword id="KW-1267">Proteomics identification</keyword>
<keyword id="KW-1185">Reference proteome</keyword>
<organism>
    <name type="scientific">Homo sapiens</name>
    <name type="common">Human</name>
    <dbReference type="NCBI Taxonomy" id="9606"/>
    <lineage>
        <taxon>Eukaryota</taxon>
        <taxon>Metazoa</taxon>
        <taxon>Chordata</taxon>
        <taxon>Craniata</taxon>
        <taxon>Vertebrata</taxon>
        <taxon>Euteleostomi</taxon>
        <taxon>Mammalia</taxon>
        <taxon>Eutheria</taxon>
        <taxon>Euarchontoglires</taxon>
        <taxon>Primates</taxon>
        <taxon>Haplorrhini</taxon>
        <taxon>Catarrhini</taxon>
        <taxon>Hominidae</taxon>
        <taxon>Homo</taxon>
    </lineage>
</organism>